<comment type="function">
    <text evidence="1">Involved in the maturation of [NiFe] hydrogenases. Involved in the biosynthesis of the Fe(CN)(2)CO cofactor. HypC delivers iron-bound CO(2) to HypD where reduction to CO probably occurs. In complex with HypD, accepts the cyanide ligand generated by HypF and HypE, and also coordinates the carbon monoxide ligand.</text>
</comment>
<comment type="pathway">
    <text evidence="1">Protein modification; [NiFe] hydrogenase maturation.</text>
</comment>
<comment type="similarity">
    <text evidence="2">Belongs to the HupF/HypC family.</text>
</comment>
<proteinExistence type="inferred from homology"/>
<evidence type="ECO:0000250" key="1">
    <source>
        <dbReference type="UniProtKB" id="P0AAM3"/>
    </source>
</evidence>
<evidence type="ECO:0000305" key="2"/>
<organism>
    <name type="scientific">Escherichia coli O157:H7</name>
    <dbReference type="NCBI Taxonomy" id="83334"/>
    <lineage>
        <taxon>Bacteria</taxon>
        <taxon>Pseudomonadati</taxon>
        <taxon>Pseudomonadota</taxon>
        <taxon>Gammaproteobacteria</taxon>
        <taxon>Enterobacterales</taxon>
        <taxon>Enterobacteriaceae</taxon>
        <taxon>Escherichia</taxon>
    </lineage>
</organism>
<reference key="1">
    <citation type="journal article" date="2001" name="Nature">
        <title>Genome sequence of enterohaemorrhagic Escherichia coli O157:H7.</title>
        <authorList>
            <person name="Perna N.T."/>
            <person name="Plunkett G. III"/>
            <person name="Burland V."/>
            <person name="Mau B."/>
            <person name="Glasner J.D."/>
            <person name="Rose D.J."/>
            <person name="Mayhew G.F."/>
            <person name="Evans P.S."/>
            <person name="Gregor J."/>
            <person name="Kirkpatrick H.A."/>
            <person name="Posfai G."/>
            <person name="Hackett J."/>
            <person name="Klink S."/>
            <person name="Boutin A."/>
            <person name="Shao Y."/>
            <person name="Miller L."/>
            <person name="Grotbeck E.J."/>
            <person name="Davis N.W."/>
            <person name="Lim A."/>
            <person name="Dimalanta E.T."/>
            <person name="Potamousis K."/>
            <person name="Apodaca J."/>
            <person name="Anantharaman T.S."/>
            <person name="Lin J."/>
            <person name="Yen G."/>
            <person name="Schwartz D.C."/>
            <person name="Welch R.A."/>
            <person name="Blattner F.R."/>
        </authorList>
    </citation>
    <scope>NUCLEOTIDE SEQUENCE [LARGE SCALE GENOMIC DNA]</scope>
    <source>
        <strain>O157:H7 / EDL933 / ATCC 700927 / EHEC</strain>
    </source>
</reference>
<reference key="2">
    <citation type="journal article" date="2001" name="DNA Res.">
        <title>Complete genome sequence of enterohemorrhagic Escherichia coli O157:H7 and genomic comparison with a laboratory strain K-12.</title>
        <authorList>
            <person name="Hayashi T."/>
            <person name="Makino K."/>
            <person name="Ohnishi M."/>
            <person name="Kurokawa K."/>
            <person name="Ishii K."/>
            <person name="Yokoyama K."/>
            <person name="Han C.-G."/>
            <person name="Ohtsubo E."/>
            <person name="Nakayama K."/>
            <person name="Murata T."/>
            <person name="Tanaka M."/>
            <person name="Tobe T."/>
            <person name="Iida T."/>
            <person name="Takami H."/>
            <person name="Honda T."/>
            <person name="Sasakawa C."/>
            <person name="Ogasawara N."/>
            <person name="Yasunaga T."/>
            <person name="Kuhara S."/>
            <person name="Shiba T."/>
            <person name="Hattori M."/>
            <person name="Shinagawa H."/>
        </authorList>
    </citation>
    <scope>NUCLEOTIDE SEQUENCE [LARGE SCALE GENOMIC DNA]</scope>
    <source>
        <strain>O157:H7 / Sakai / RIMD 0509952 / EHEC</strain>
    </source>
</reference>
<keyword id="KW-1185">Reference proteome</keyword>
<gene>
    <name type="primary">hypC</name>
    <name type="ordered locus">Z4037</name>
    <name type="ordered locus">ECs3584</name>
</gene>
<sequence length="90" mass="9732">MCIGVPGQIRTIDGNQAKVDVCGIQRDVDLTLVGSCDENGQPRVGQWVLVHVGFAMSVINEAEARDTLDALQNMFDVEPDVGALLYGEEK</sequence>
<accession>P0AAM5</accession>
<accession>P24191</accession>
<feature type="chain" id="PRO_0000201399" description="Hydrogenase maturation factor HypC">
    <location>
        <begin position="1"/>
        <end position="90"/>
    </location>
</feature>
<feature type="site" description="Important for interaction with HypD and the precursor form of hydrogenase" evidence="1">
    <location>
        <position position="2"/>
    </location>
</feature>
<dbReference type="EMBL" id="AE005174">
    <property type="protein sequence ID" value="AAG57836.1"/>
    <property type="molecule type" value="Genomic_DNA"/>
</dbReference>
<dbReference type="EMBL" id="BA000007">
    <property type="protein sequence ID" value="BAB37007.1"/>
    <property type="molecule type" value="Genomic_DNA"/>
</dbReference>
<dbReference type="PIR" id="H85921">
    <property type="entry name" value="H85921"/>
</dbReference>
<dbReference type="PIR" id="H91076">
    <property type="entry name" value="H91076"/>
</dbReference>
<dbReference type="RefSeq" id="NP_311611.1">
    <property type="nucleotide sequence ID" value="NC_002695.1"/>
</dbReference>
<dbReference type="RefSeq" id="WP_000334881.1">
    <property type="nucleotide sequence ID" value="NZ_VOAI01000003.1"/>
</dbReference>
<dbReference type="BMRB" id="P0AAM5"/>
<dbReference type="SMR" id="P0AAM5"/>
<dbReference type="STRING" id="155864.Z4037"/>
<dbReference type="GeneID" id="914694"/>
<dbReference type="GeneID" id="93779280"/>
<dbReference type="KEGG" id="ece:Z4037"/>
<dbReference type="KEGG" id="ecs:ECs_3584"/>
<dbReference type="PATRIC" id="fig|386585.9.peg.3746"/>
<dbReference type="eggNOG" id="COG0298">
    <property type="taxonomic scope" value="Bacteria"/>
</dbReference>
<dbReference type="HOGENOM" id="CLU_159381_1_1_6"/>
<dbReference type="OMA" id="QKMGADY"/>
<dbReference type="UniPathway" id="UPA00335"/>
<dbReference type="Proteomes" id="UP000000558">
    <property type="component" value="Chromosome"/>
</dbReference>
<dbReference type="Proteomes" id="UP000002519">
    <property type="component" value="Chromosome"/>
</dbReference>
<dbReference type="GO" id="GO:1902670">
    <property type="term" value="F:carbon dioxide binding"/>
    <property type="evidence" value="ECO:0007669"/>
    <property type="project" value="TreeGrafter"/>
</dbReference>
<dbReference type="GO" id="GO:0005506">
    <property type="term" value="F:iron ion binding"/>
    <property type="evidence" value="ECO:0007669"/>
    <property type="project" value="TreeGrafter"/>
</dbReference>
<dbReference type="GO" id="GO:0051604">
    <property type="term" value="P:protein maturation"/>
    <property type="evidence" value="ECO:0007669"/>
    <property type="project" value="TreeGrafter"/>
</dbReference>
<dbReference type="FunFam" id="2.30.30.140:FF:000023">
    <property type="entry name" value="Hydrogenase assembly chaperone protein HypC"/>
    <property type="match status" value="1"/>
</dbReference>
<dbReference type="Gene3D" id="2.30.30.140">
    <property type="match status" value="1"/>
</dbReference>
<dbReference type="Gene3D" id="6.10.250.910">
    <property type="match status" value="1"/>
</dbReference>
<dbReference type="InterPro" id="IPR019812">
    <property type="entry name" value="Hydgase_assmbl_chp_CS"/>
</dbReference>
<dbReference type="InterPro" id="IPR001109">
    <property type="entry name" value="Hydrogenase_HupF/HypC"/>
</dbReference>
<dbReference type="NCBIfam" id="TIGR00074">
    <property type="entry name" value="hypC_hupF"/>
    <property type="match status" value="1"/>
</dbReference>
<dbReference type="NCBIfam" id="NF007712">
    <property type="entry name" value="PRK10409.1"/>
    <property type="match status" value="1"/>
</dbReference>
<dbReference type="PANTHER" id="PTHR35177">
    <property type="entry name" value="HYDROGENASE MATURATION FACTOR HYBG"/>
    <property type="match status" value="1"/>
</dbReference>
<dbReference type="PANTHER" id="PTHR35177:SF1">
    <property type="entry name" value="HYDROGENASE MATURATION FACTOR HYPC"/>
    <property type="match status" value="1"/>
</dbReference>
<dbReference type="Pfam" id="PF01455">
    <property type="entry name" value="HupF_HypC"/>
    <property type="match status" value="1"/>
</dbReference>
<dbReference type="PRINTS" id="PR00445">
    <property type="entry name" value="HUPFHYPC"/>
</dbReference>
<dbReference type="SUPFAM" id="SSF159127">
    <property type="entry name" value="HupF/HypC-like"/>
    <property type="match status" value="1"/>
</dbReference>
<dbReference type="PROSITE" id="PS01097">
    <property type="entry name" value="HUPF_HYPC"/>
    <property type="match status" value="1"/>
</dbReference>
<name>HYPC_ECO57</name>
<protein>
    <recommendedName>
        <fullName evidence="1">Hydrogenase maturation factor HypC</fullName>
    </recommendedName>
</protein>